<reference key="1">
    <citation type="journal article" date="2007" name="Environ. Microbiol.">
        <title>Whole-genome analysis of the ammonia-oxidizing bacterium, Nitrosomonas eutropha C91: implications for niche adaptation.</title>
        <authorList>
            <person name="Stein L.Y."/>
            <person name="Arp D.J."/>
            <person name="Berube P.M."/>
            <person name="Chain P.S."/>
            <person name="Hauser L."/>
            <person name="Jetten M.S."/>
            <person name="Klotz M.G."/>
            <person name="Larimer F.W."/>
            <person name="Norton J.M."/>
            <person name="Op den Camp H.J.M."/>
            <person name="Shin M."/>
            <person name="Wei X."/>
        </authorList>
    </citation>
    <scope>NUCLEOTIDE SEQUENCE [LARGE SCALE GENOMIC DNA]</scope>
    <source>
        <strain>DSM 101675 / C91 / Nm57</strain>
    </source>
</reference>
<dbReference type="EMBL" id="CP000450">
    <property type="protein sequence ID" value="ABI59216.1"/>
    <property type="molecule type" value="Genomic_DNA"/>
</dbReference>
<dbReference type="RefSeq" id="WP_011634040.1">
    <property type="nucleotide sequence ID" value="NC_008344.1"/>
</dbReference>
<dbReference type="SMR" id="Q0AHG6"/>
<dbReference type="STRING" id="335283.Neut_0956"/>
<dbReference type="KEGG" id="net:Neut_0956"/>
<dbReference type="eggNOG" id="COG0211">
    <property type="taxonomic scope" value="Bacteria"/>
</dbReference>
<dbReference type="HOGENOM" id="CLU_095424_4_1_4"/>
<dbReference type="OrthoDB" id="9803474at2"/>
<dbReference type="Proteomes" id="UP000001966">
    <property type="component" value="Chromosome"/>
</dbReference>
<dbReference type="GO" id="GO:0022625">
    <property type="term" value="C:cytosolic large ribosomal subunit"/>
    <property type="evidence" value="ECO:0007669"/>
    <property type="project" value="TreeGrafter"/>
</dbReference>
<dbReference type="GO" id="GO:0003735">
    <property type="term" value="F:structural constituent of ribosome"/>
    <property type="evidence" value="ECO:0007669"/>
    <property type="project" value="InterPro"/>
</dbReference>
<dbReference type="GO" id="GO:0006412">
    <property type="term" value="P:translation"/>
    <property type="evidence" value="ECO:0007669"/>
    <property type="project" value="UniProtKB-UniRule"/>
</dbReference>
<dbReference type="FunFam" id="2.40.50.100:FF:000001">
    <property type="entry name" value="50S ribosomal protein L27"/>
    <property type="match status" value="1"/>
</dbReference>
<dbReference type="Gene3D" id="2.40.50.100">
    <property type="match status" value="1"/>
</dbReference>
<dbReference type="HAMAP" id="MF_00539">
    <property type="entry name" value="Ribosomal_bL27"/>
    <property type="match status" value="1"/>
</dbReference>
<dbReference type="InterPro" id="IPR001684">
    <property type="entry name" value="Ribosomal_bL27"/>
</dbReference>
<dbReference type="InterPro" id="IPR018261">
    <property type="entry name" value="Ribosomal_bL27_CS"/>
</dbReference>
<dbReference type="NCBIfam" id="TIGR00062">
    <property type="entry name" value="L27"/>
    <property type="match status" value="1"/>
</dbReference>
<dbReference type="PANTHER" id="PTHR15893:SF0">
    <property type="entry name" value="LARGE RIBOSOMAL SUBUNIT PROTEIN BL27M"/>
    <property type="match status" value="1"/>
</dbReference>
<dbReference type="PANTHER" id="PTHR15893">
    <property type="entry name" value="RIBOSOMAL PROTEIN L27"/>
    <property type="match status" value="1"/>
</dbReference>
<dbReference type="Pfam" id="PF01016">
    <property type="entry name" value="Ribosomal_L27"/>
    <property type="match status" value="1"/>
</dbReference>
<dbReference type="PRINTS" id="PR00063">
    <property type="entry name" value="RIBOSOMALL27"/>
</dbReference>
<dbReference type="SUPFAM" id="SSF110324">
    <property type="entry name" value="Ribosomal L27 protein-like"/>
    <property type="match status" value="1"/>
</dbReference>
<dbReference type="PROSITE" id="PS00831">
    <property type="entry name" value="RIBOSOMAL_L27"/>
    <property type="match status" value="1"/>
</dbReference>
<evidence type="ECO:0000255" key="1">
    <source>
        <dbReference type="HAMAP-Rule" id="MF_00539"/>
    </source>
</evidence>
<evidence type="ECO:0000256" key="2">
    <source>
        <dbReference type="SAM" id="MobiDB-lite"/>
    </source>
</evidence>
<evidence type="ECO:0000305" key="3"/>
<protein>
    <recommendedName>
        <fullName evidence="1">Large ribosomal subunit protein bL27</fullName>
    </recommendedName>
    <alternativeName>
        <fullName evidence="3">50S ribosomal protein L27</fullName>
    </alternativeName>
</protein>
<comment type="similarity">
    <text evidence="1">Belongs to the bacterial ribosomal protein bL27 family.</text>
</comment>
<organism>
    <name type="scientific">Nitrosomonas eutropha (strain DSM 101675 / C91 / Nm57)</name>
    <dbReference type="NCBI Taxonomy" id="335283"/>
    <lineage>
        <taxon>Bacteria</taxon>
        <taxon>Pseudomonadati</taxon>
        <taxon>Pseudomonadota</taxon>
        <taxon>Betaproteobacteria</taxon>
        <taxon>Nitrosomonadales</taxon>
        <taxon>Nitrosomonadaceae</taxon>
        <taxon>Nitrosomonas</taxon>
    </lineage>
</organism>
<accession>Q0AHG6</accession>
<feature type="chain" id="PRO_1000017529" description="Large ribosomal subunit protein bL27">
    <location>
        <begin position="1"/>
        <end position="85"/>
    </location>
</feature>
<feature type="region of interest" description="Disordered" evidence="2">
    <location>
        <begin position="1"/>
        <end position="24"/>
    </location>
</feature>
<sequence>MAHKKAGGSSRNGRDSHSKRLGVKRYGGEVIRAGGIIVRQRGTQFHPGDNVGIGRDHTLFAKVDGKIVFTIRGRLNRRTVAVIPS</sequence>
<name>RL27_NITEC</name>
<gene>
    <name evidence="1" type="primary">rpmA</name>
    <name type="ordered locus">Neut_0956</name>
</gene>
<proteinExistence type="inferred from homology"/>
<keyword id="KW-0687">Ribonucleoprotein</keyword>
<keyword id="KW-0689">Ribosomal protein</keyword>